<protein>
    <recommendedName>
        <fullName evidence="1">Iron-sulfur cluster insertion protein ErpA</fullName>
    </recommendedName>
</protein>
<feature type="chain" id="PRO_1000144910" description="Iron-sulfur cluster insertion protein ErpA">
    <location>
        <begin position="1"/>
        <end position="114"/>
    </location>
</feature>
<feature type="binding site" evidence="1">
    <location>
        <position position="42"/>
    </location>
    <ligand>
        <name>iron-sulfur cluster</name>
        <dbReference type="ChEBI" id="CHEBI:30408"/>
    </ligand>
</feature>
<feature type="binding site" evidence="1">
    <location>
        <position position="106"/>
    </location>
    <ligand>
        <name>iron-sulfur cluster</name>
        <dbReference type="ChEBI" id="CHEBI:30408"/>
    </ligand>
</feature>
<feature type="binding site" evidence="1">
    <location>
        <position position="108"/>
    </location>
    <ligand>
        <name>iron-sulfur cluster</name>
        <dbReference type="ChEBI" id="CHEBI:30408"/>
    </ligand>
</feature>
<organism>
    <name type="scientific">Escherichia coli O8 (strain IAI1)</name>
    <dbReference type="NCBI Taxonomy" id="585034"/>
    <lineage>
        <taxon>Bacteria</taxon>
        <taxon>Pseudomonadati</taxon>
        <taxon>Pseudomonadota</taxon>
        <taxon>Gammaproteobacteria</taxon>
        <taxon>Enterobacterales</taxon>
        <taxon>Enterobacteriaceae</taxon>
        <taxon>Escherichia</taxon>
    </lineage>
</organism>
<keyword id="KW-0408">Iron</keyword>
<keyword id="KW-0411">Iron-sulfur</keyword>
<keyword id="KW-0479">Metal-binding</keyword>
<evidence type="ECO:0000255" key="1">
    <source>
        <dbReference type="HAMAP-Rule" id="MF_01380"/>
    </source>
</evidence>
<dbReference type="EMBL" id="CU928160">
    <property type="protein sequence ID" value="CAQ97043.1"/>
    <property type="molecule type" value="Genomic_DNA"/>
</dbReference>
<dbReference type="RefSeq" id="WP_001295564.1">
    <property type="nucleotide sequence ID" value="NC_011741.1"/>
</dbReference>
<dbReference type="SMR" id="B7M197"/>
<dbReference type="GeneID" id="93777270"/>
<dbReference type="KEGG" id="ecr:ECIAI1_0155"/>
<dbReference type="HOGENOM" id="CLU_069054_5_3_6"/>
<dbReference type="GO" id="GO:0005829">
    <property type="term" value="C:cytosol"/>
    <property type="evidence" value="ECO:0007669"/>
    <property type="project" value="TreeGrafter"/>
</dbReference>
<dbReference type="GO" id="GO:0051537">
    <property type="term" value="F:2 iron, 2 sulfur cluster binding"/>
    <property type="evidence" value="ECO:0007669"/>
    <property type="project" value="UniProtKB-ARBA"/>
</dbReference>
<dbReference type="GO" id="GO:0051539">
    <property type="term" value="F:4 iron, 4 sulfur cluster binding"/>
    <property type="evidence" value="ECO:0007669"/>
    <property type="project" value="TreeGrafter"/>
</dbReference>
<dbReference type="GO" id="GO:0005506">
    <property type="term" value="F:iron ion binding"/>
    <property type="evidence" value="ECO:0007669"/>
    <property type="project" value="UniProtKB-UniRule"/>
</dbReference>
<dbReference type="GO" id="GO:0016226">
    <property type="term" value="P:iron-sulfur cluster assembly"/>
    <property type="evidence" value="ECO:0007669"/>
    <property type="project" value="UniProtKB-UniRule"/>
</dbReference>
<dbReference type="FunFam" id="2.60.300.12:FF:000002">
    <property type="entry name" value="Iron-sulfur cluster insertion protein ErpA"/>
    <property type="match status" value="1"/>
</dbReference>
<dbReference type="Gene3D" id="2.60.300.12">
    <property type="entry name" value="HesB-like domain"/>
    <property type="match status" value="1"/>
</dbReference>
<dbReference type="HAMAP" id="MF_01380">
    <property type="entry name" value="Fe_S_insert_ErpA"/>
    <property type="match status" value="1"/>
</dbReference>
<dbReference type="InterPro" id="IPR000361">
    <property type="entry name" value="FeS_biogenesis"/>
</dbReference>
<dbReference type="InterPro" id="IPR016092">
    <property type="entry name" value="FeS_cluster_insertion"/>
</dbReference>
<dbReference type="InterPro" id="IPR017870">
    <property type="entry name" value="FeS_cluster_insertion_CS"/>
</dbReference>
<dbReference type="InterPro" id="IPR023063">
    <property type="entry name" value="FeS_cluster_insertion_RrpA"/>
</dbReference>
<dbReference type="InterPro" id="IPR035903">
    <property type="entry name" value="HesB-like_dom_sf"/>
</dbReference>
<dbReference type="NCBIfam" id="TIGR00049">
    <property type="entry name" value="iron-sulfur cluster assembly accessory protein"/>
    <property type="match status" value="1"/>
</dbReference>
<dbReference type="NCBIfam" id="NF010147">
    <property type="entry name" value="PRK13623.1"/>
    <property type="match status" value="1"/>
</dbReference>
<dbReference type="PANTHER" id="PTHR43011">
    <property type="entry name" value="IRON-SULFUR CLUSTER ASSEMBLY 2 HOMOLOG, MITOCHONDRIAL"/>
    <property type="match status" value="1"/>
</dbReference>
<dbReference type="PANTHER" id="PTHR43011:SF1">
    <property type="entry name" value="IRON-SULFUR CLUSTER ASSEMBLY 2 HOMOLOG, MITOCHONDRIAL"/>
    <property type="match status" value="1"/>
</dbReference>
<dbReference type="Pfam" id="PF01521">
    <property type="entry name" value="Fe-S_biosyn"/>
    <property type="match status" value="1"/>
</dbReference>
<dbReference type="SUPFAM" id="SSF89360">
    <property type="entry name" value="HesB-like domain"/>
    <property type="match status" value="1"/>
</dbReference>
<dbReference type="PROSITE" id="PS01152">
    <property type="entry name" value="HESB"/>
    <property type="match status" value="1"/>
</dbReference>
<accession>B7M197</accession>
<sequence>MSDDVALPLEFTDAAANKVKSLIADEDNPNLKLRVYITGGGCSGFQYGFTFDDQVNEGDMTIEKQGVGLVVDPMSLQYLVGGSVDYTEGLEGSRFIVTNPNAKSTCGCGSSFSI</sequence>
<reference key="1">
    <citation type="journal article" date="2009" name="PLoS Genet.">
        <title>Organised genome dynamics in the Escherichia coli species results in highly diverse adaptive paths.</title>
        <authorList>
            <person name="Touchon M."/>
            <person name="Hoede C."/>
            <person name="Tenaillon O."/>
            <person name="Barbe V."/>
            <person name="Baeriswyl S."/>
            <person name="Bidet P."/>
            <person name="Bingen E."/>
            <person name="Bonacorsi S."/>
            <person name="Bouchier C."/>
            <person name="Bouvet O."/>
            <person name="Calteau A."/>
            <person name="Chiapello H."/>
            <person name="Clermont O."/>
            <person name="Cruveiller S."/>
            <person name="Danchin A."/>
            <person name="Diard M."/>
            <person name="Dossat C."/>
            <person name="Karoui M.E."/>
            <person name="Frapy E."/>
            <person name="Garry L."/>
            <person name="Ghigo J.M."/>
            <person name="Gilles A.M."/>
            <person name="Johnson J."/>
            <person name="Le Bouguenec C."/>
            <person name="Lescat M."/>
            <person name="Mangenot S."/>
            <person name="Martinez-Jehanne V."/>
            <person name="Matic I."/>
            <person name="Nassif X."/>
            <person name="Oztas S."/>
            <person name="Petit M.A."/>
            <person name="Pichon C."/>
            <person name="Rouy Z."/>
            <person name="Ruf C.S."/>
            <person name="Schneider D."/>
            <person name="Tourret J."/>
            <person name="Vacherie B."/>
            <person name="Vallenet D."/>
            <person name="Medigue C."/>
            <person name="Rocha E.P.C."/>
            <person name="Denamur E."/>
        </authorList>
    </citation>
    <scope>NUCLEOTIDE SEQUENCE [LARGE SCALE GENOMIC DNA]</scope>
    <source>
        <strain>IAI1</strain>
    </source>
</reference>
<gene>
    <name evidence="1" type="primary">erpA</name>
    <name type="ordered locus">ECIAI1_0155</name>
</gene>
<name>ERPA_ECO8A</name>
<comment type="function">
    <text evidence="1">Required for insertion of 4Fe-4S clusters for at least IspG.</text>
</comment>
<comment type="cofactor">
    <cofactor evidence="1">
        <name>iron-sulfur cluster</name>
        <dbReference type="ChEBI" id="CHEBI:30408"/>
    </cofactor>
    <text evidence="1">Binds 1 iron-sulfur cluster per subunit.</text>
</comment>
<comment type="subunit">
    <text evidence="1">Homodimer.</text>
</comment>
<comment type="similarity">
    <text evidence="1">Belongs to the HesB/IscA family.</text>
</comment>
<proteinExistence type="inferred from homology"/>